<name>GLPK_POLSJ</name>
<organism>
    <name type="scientific">Polaromonas sp. (strain JS666 / ATCC BAA-500)</name>
    <dbReference type="NCBI Taxonomy" id="296591"/>
    <lineage>
        <taxon>Bacteria</taxon>
        <taxon>Pseudomonadati</taxon>
        <taxon>Pseudomonadota</taxon>
        <taxon>Betaproteobacteria</taxon>
        <taxon>Burkholderiales</taxon>
        <taxon>Comamonadaceae</taxon>
        <taxon>Polaromonas</taxon>
    </lineage>
</organism>
<keyword id="KW-0067">ATP-binding</keyword>
<keyword id="KW-0319">Glycerol metabolism</keyword>
<keyword id="KW-0418">Kinase</keyword>
<keyword id="KW-0547">Nucleotide-binding</keyword>
<keyword id="KW-1185">Reference proteome</keyword>
<keyword id="KW-0808">Transferase</keyword>
<feature type="chain" id="PRO_1000098749" description="Glycerol kinase">
    <location>
        <begin position="1"/>
        <end position="497"/>
    </location>
</feature>
<feature type="binding site" evidence="1">
    <location>
        <position position="11"/>
    </location>
    <ligand>
        <name>ADP</name>
        <dbReference type="ChEBI" id="CHEBI:456216"/>
    </ligand>
</feature>
<feature type="binding site" evidence="1">
    <location>
        <position position="11"/>
    </location>
    <ligand>
        <name>ATP</name>
        <dbReference type="ChEBI" id="CHEBI:30616"/>
    </ligand>
</feature>
<feature type="binding site" evidence="1">
    <location>
        <position position="11"/>
    </location>
    <ligand>
        <name>sn-glycerol 3-phosphate</name>
        <dbReference type="ChEBI" id="CHEBI:57597"/>
    </ligand>
</feature>
<feature type="binding site" evidence="1">
    <location>
        <position position="12"/>
    </location>
    <ligand>
        <name>ATP</name>
        <dbReference type="ChEBI" id="CHEBI:30616"/>
    </ligand>
</feature>
<feature type="binding site" evidence="1">
    <location>
        <position position="13"/>
    </location>
    <ligand>
        <name>ATP</name>
        <dbReference type="ChEBI" id="CHEBI:30616"/>
    </ligand>
</feature>
<feature type="binding site" evidence="1">
    <location>
        <position position="15"/>
    </location>
    <ligand>
        <name>ADP</name>
        <dbReference type="ChEBI" id="CHEBI:456216"/>
    </ligand>
</feature>
<feature type="binding site" evidence="1">
    <location>
        <position position="81"/>
    </location>
    <ligand>
        <name>glycerol</name>
        <dbReference type="ChEBI" id="CHEBI:17754"/>
    </ligand>
</feature>
<feature type="binding site" evidence="1">
    <location>
        <position position="81"/>
    </location>
    <ligand>
        <name>sn-glycerol 3-phosphate</name>
        <dbReference type="ChEBI" id="CHEBI:57597"/>
    </ligand>
</feature>
<feature type="binding site" evidence="1">
    <location>
        <position position="82"/>
    </location>
    <ligand>
        <name>glycerol</name>
        <dbReference type="ChEBI" id="CHEBI:17754"/>
    </ligand>
</feature>
<feature type="binding site" evidence="1">
    <location>
        <position position="82"/>
    </location>
    <ligand>
        <name>sn-glycerol 3-phosphate</name>
        <dbReference type="ChEBI" id="CHEBI:57597"/>
    </ligand>
</feature>
<feature type="binding site" evidence="1">
    <location>
        <position position="133"/>
    </location>
    <ligand>
        <name>glycerol</name>
        <dbReference type="ChEBI" id="CHEBI:17754"/>
    </ligand>
</feature>
<feature type="binding site" evidence="1">
    <location>
        <position position="133"/>
    </location>
    <ligand>
        <name>sn-glycerol 3-phosphate</name>
        <dbReference type="ChEBI" id="CHEBI:57597"/>
    </ligand>
</feature>
<feature type="binding site" evidence="1">
    <location>
        <position position="242"/>
    </location>
    <ligand>
        <name>glycerol</name>
        <dbReference type="ChEBI" id="CHEBI:17754"/>
    </ligand>
</feature>
<feature type="binding site" evidence="1">
    <location>
        <position position="242"/>
    </location>
    <ligand>
        <name>sn-glycerol 3-phosphate</name>
        <dbReference type="ChEBI" id="CHEBI:57597"/>
    </ligand>
</feature>
<feature type="binding site" evidence="1">
    <location>
        <position position="243"/>
    </location>
    <ligand>
        <name>glycerol</name>
        <dbReference type="ChEBI" id="CHEBI:17754"/>
    </ligand>
</feature>
<feature type="binding site" evidence="1">
    <location>
        <position position="264"/>
    </location>
    <ligand>
        <name>ADP</name>
        <dbReference type="ChEBI" id="CHEBI:456216"/>
    </ligand>
</feature>
<feature type="binding site" evidence="1">
    <location>
        <position position="264"/>
    </location>
    <ligand>
        <name>ATP</name>
        <dbReference type="ChEBI" id="CHEBI:30616"/>
    </ligand>
</feature>
<feature type="binding site" evidence="1">
    <location>
        <position position="307"/>
    </location>
    <ligand>
        <name>ADP</name>
        <dbReference type="ChEBI" id="CHEBI:456216"/>
    </ligand>
</feature>
<feature type="binding site" evidence="1">
    <location>
        <position position="307"/>
    </location>
    <ligand>
        <name>ATP</name>
        <dbReference type="ChEBI" id="CHEBI:30616"/>
    </ligand>
</feature>
<feature type="binding site" evidence="1">
    <location>
        <position position="311"/>
    </location>
    <ligand>
        <name>ATP</name>
        <dbReference type="ChEBI" id="CHEBI:30616"/>
    </ligand>
</feature>
<feature type="binding site" evidence="1">
    <location>
        <position position="412"/>
    </location>
    <ligand>
        <name>ADP</name>
        <dbReference type="ChEBI" id="CHEBI:456216"/>
    </ligand>
</feature>
<feature type="binding site" evidence="1">
    <location>
        <position position="412"/>
    </location>
    <ligand>
        <name>ATP</name>
        <dbReference type="ChEBI" id="CHEBI:30616"/>
    </ligand>
</feature>
<feature type="binding site" evidence="1">
    <location>
        <position position="416"/>
    </location>
    <ligand>
        <name>ADP</name>
        <dbReference type="ChEBI" id="CHEBI:456216"/>
    </ligand>
</feature>
<gene>
    <name evidence="1" type="primary">glpK</name>
    <name type="ordered locus">Bpro_0476</name>
</gene>
<reference key="1">
    <citation type="journal article" date="2008" name="Appl. Environ. Microbiol.">
        <title>The genome of Polaromonas sp. strain JS666: insights into the evolution of a hydrocarbon- and xenobiotic-degrading bacterium, and features of relevance to biotechnology.</title>
        <authorList>
            <person name="Mattes T.E."/>
            <person name="Alexander A.K."/>
            <person name="Richardson P.M."/>
            <person name="Munk A.C."/>
            <person name="Han C.S."/>
            <person name="Stothard P."/>
            <person name="Coleman N.V."/>
        </authorList>
    </citation>
    <scope>NUCLEOTIDE SEQUENCE [LARGE SCALE GENOMIC DNA]</scope>
    <source>
        <strain>JS666 / ATCC BAA-500</strain>
    </source>
</reference>
<dbReference type="EC" id="2.7.1.30" evidence="1"/>
<dbReference type="EMBL" id="CP000316">
    <property type="protein sequence ID" value="ABE42440.1"/>
    <property type="molecule type" value="Genomic_DNA"/>
</dbReference>
<dbReference type="RefSeq" id="WP_011481447.1">
    <property type="nucleotide sequence ID" value="NC_007948.1"/>
</dbReference>
<dbReference type="SMR" id="Q12GA2"/>
<dbReference type="STRING" id="296591.Bpro_0476"/>
<dbReference type="KEGG" id="pol:Bpro_0476"/>
<dbReference type="eggNOG" id="COG0554">
    <property type="taxonomic scope" value="Bacteria"/>
</dbReference>
<dbReference type="HOGENOM" id="CLU_009281_2_3_4"/>
<dbReference type="OrthoDB" id="9805576at2"/>
<dbReference type="UniPathway" id="UPA00618">
    <property type="reaction ID" value="UER00672"/>
</dbReference>
<dbReference type="Proteomes" id="UP000001983">
    <property type="component" value="Chromosome"/>
</dbReference>
<dbReference type="GO" id="GO:0005829">
    <property type="term" value="C:cytosol"/>
    <property type="evidence" value="ECO:0007669"/>
    <property type="project" value="TreeGrafter"/>
</dbReference>
<dbReference type="GO" id="GO:0005524">
    <property type="term" value="F:ATP binding"/>
    <property type="evidence" value="ECO:0007669"/>
    <property type="project" value="UniProtKB-UniRule"/>
</dbReference>
<dbReference type="GO" id="GO:0004370">
    <property type="term" value="F:glycerol kinase activity"/>
    <property type="evidence" value="ECO:0000250"/>
    <property type="project" value="UniProtKB"/>
</dbReference>
<dbReference type="GO" id="GO:0019563">
    <property type="term" value="P:glycerol catabolic process"/>
    <property type="evidence" value="ECO:0007669"/>
    <property type="project" value="UniProtKB-UniRule"/>
</dbReference>
<dbReference type="GO" id="GO:0006071">
    <property type="term" value="P:glycerol metabolic process"/>
    <property type="evidence" value="ECO:0000250"/>
    <property type="project" value="UniProtKB"/>
</dbReference>
<dbReference type="GO" id="GO:0006072">
    <property type="term" value="P:glycerol-3-phosphate metabolic process"/>
    <property type="evidence" value="ECO:0007669"/>
    <property type="project" value="InterPro"/>
</dbReference>
<dbReference type="CDD" id="cd07786">
    <property type="entry name" value="FGGY_EcGK_like"/>
    <property type="match status" value="1"/>
</dbReference>
<dbReference type="FunFam" id="3.30.420.40:FF:000007">
    <property type="entry name" value="Glycerol kinase"/>
    <property type="match status" value="1"/>
</dbReference>
<dbReference type="FunFam" id="3.30.420.40:FF:000008">
    <property type="entry name" value="Glycerol kinase"/>
    <property type="match status" value="1"/>
</dbReference>
<dbReference type="Gene3D" id="3.30.420.40">
    <property type="match status" value="2"/>
</dbReference>
<dbReference type="HAMAP" id="MF_00186">
    <property type="entry name" value="Glycerol_kin"/>
    <property type="match status" value="1"/>
</dbReference>
<dbReference type="InterPro" id="IPR043129">
    <property type="entry name" value="ATPase_NBD"/>
</dbReference>
<dbReference type="InterPro" id="IPR000577">
    <property type="entry name" value="Carb_kinase_FGGY"/>
</dbReference>
<dbReference type="InterPro" id="IPR018483">
    <property type="entry name" value="Carb_kinase_FGGY_CS"/>
</dbReference>
<dbReference type="InterPro" id="IPR018485">
    <property type="entry name" value="FGGY_C"/>
</dbReference>
<dbReference type="InterPro" id="IPR018484">
    <property type="entry name" value="FGGY_N"/>
</dbReference>
<dbReference type="InterPro" id="IPR005999">
    <property type="entry name" value="Glycerol_kin"/>
</dbReference>
<dbReference type="NCBIfam" id="TIGR01311">
    <property type="entry name" value="glycerol_kin"/>
    <property type="match status" value="1"/>
</dbReference>
<dbReference type="NCBIfam" id="NF000756">
    <property type="entry name" value="PRK00047.1"/>
    <property type="match status" value="1"/>
</dbReference>
<dbReference type="PANTHER" id="PTHR10196:SF69">
    <property type="entry name" value="GLYCEROL KINASE"/>
    <property type="match status" value="1"/>
</dbReference>
<dbReference type="PANTHER" id="PTHR10196">
    <property type="entry name" value="SUGAR KINASE"/>
    <property type="match status" value="1"/>
</dbReference>
<dbReference type="Pfam" id="PF02782">
    <property type="entry name" value="FGGY_C"/>
    <property type="match status" value="1"/>
</dbReference>
<dbReference type="Pfam" id="PF00370">
    <property type="entry name" value="FGGY_N"/>
    <property type="match status" value="1"/>
</dbReference>
<dbReference type="PIRSF" id="PIRSF000538">
    <property type="entry name" value="GlpK"/>
    <property type="match status" value="1"/>
</dbReference>
<dbReference type="SUPFAM" id="SSF53067">
    <property type="entry name" value="Actin-like ATPase domain"/>
    <property type="match status" value="2"/>
</dbReference>
<dbReference type="PROSITE" id="PS00933">
    <property type="entry name" value="FGGY_KINASES_1"/>
    <property type="match status" value="1"/>
</dbReference>
<dbReference type="PROSITE" id="PS00445">
    <property type="entry name" value="FGGY_KINASES_2"/>
    <property type="match status" value="1"/>
</dbReference>
<sequence>MTYLLALDQGTSSSRSIVFDELGHIVAQAQQELPQIYPKPGWVEHDPMEIWRTQLATAREALGKAGLKASDIRALGITNQRETTVVWHRATGQPIHNAIVWQDRRAEATCAQLREQGKEALIQSKTGLLIDAYFSGTKLKWLLDNVPGVRAQAERGELAFGTIDSWLMWQLTGGALHATDVSNASRTMLFNVRTNQWDAELLDLLGIPASLMPQVLPSSAHYGETRPELLGHAIAIGGVAGDQQSALFGQACFKAGMAKNTYGTGCFMLMHTGTQFQTSHNGLLTTSAAQTTAHPEFAMEGSVFVGGAVVQWLRDGLHAIQGSGEVQALAQSVPDSGGVMMVPAFTGLGAPYWKPDARGTITGLTRGTTVAHIARAALESIAYQSAALLQAMSRDAVSSGAAPLAELRVDGGACANDLLMQFQADLLGIPVLRPAVIETTALGAAYLAGLSSGVYRSTDELSGMWRAERTFLPTLGADSAAALMNRWEHAVRQTVLP</sequence>
<comment type="function">
    <text evidence="1">Key enzyme in the regulation of glycerol uptake and metabolism. Catalyzes the phosphorylation of glycerol to yield sn-glycerol 3-phosphate.</text>
</comment>
<comment type="catalytic activity">
    <reaction evidence="1">
        <text>glycerol + ATP = sn-glycerol 3-phosphate + ADP + H(+)</text>
        <dbReference type="Rhea" id="RHEA:21644"/>
        <dbReference type="ChEBI" id="CHEBI:15378"/>
        <dbReference type="ChEBI" id="CHEBI:17754"/>
        <dbReference type="ChEBI" id="CHEBI:30616"/>
        <dbReference type="ChEBI" id="CHEBI:57597"/>
        <dbReference type="ChEBI" id="CHEBI:456216"/>
        <dbReference type="EC" id="2.7.1.30"/>
    </reaction>
</comment>
<comment type="activity regulation">
    <text evidence="1">Inhibited by fructose 1,6-bisphosphate (FBP).</text>
</comment>
<comment type="pathway">
    <text evidence="1">Polyol metabolism; glycerol degradation via glycerol kinase pathway; sn-glycerol 3-phosphate from glycerol: step 1/1.</text>
</comment>
<comment type="similarity">
    <text evidence="1">Belongs to the FGGY kinase family.</text>
</comment>
<proteinExistence type="inferred from homology"/>
<accession>Q12GA2</accession>
<protein>
    <recommendedName>
        <fullName evidence="1">Glycerol kinase</fullName>
        <ecNumber evidence="1">2.7.1.30</ecNumber>
    </recommendedName>
    <alternativeName>
        <fullName evidence="1">ATP:glycerol 3-phosphotransferase</fullName>
    </alternativeName>
    <alternativeName>
        <fullName evidence="1">Glycerokinase</fullName>
        <shortName evidence="1">GK</shortName>
    </alternativeName>
</protein>
<evidence type="ECO:0000255" key="1">
    <source>
        <dbReference type="HAMAP-Rule" id="MF_00186"/>
    </source>
</evidence>